<sequence>MNKDNVKLAIAPIGWTNDDMPELGSENTFQQIVSEMALAGFTGSEVGSKYPRDPAVLKPMLDIRGIQICNAWFSTFFANGQREKTIDEFVNHMNFLHAMGANVIGCSEQSGSIQGLDKPILGDAKPCFSEEEWQRVAEGYNTLGRLAAEKGMQVCLHHHMGTGIQTTAEIDKFMSLVDERVFLLFDTGHAWYSEGGEAPMLAILKKYLPRINHVHLKDVRPPVIDQVRRDGLSFLDGVKKGTFTVPGDGVIDFRPVFKLLDDFGYKGWMVVEAEQDPALANPFEYAVKARKYIRETAGI</sequence>
<keyword id="KW-0170">Cobalt</keyword>
<keyword id="KW-0456">Lyase</keyword>
<keyword id="KW-0464">Manganese</keyword>
<protein>
    <recommendedName>
        <fullName evidence="1">Inosose dehydratase</fullName>
        <ecNumber evidence="1">4.2.1.44</ecNumber>
    </recommendedName>
    <alternativeName>
        <fullName evidence="1">2-keto-myo-inositol dehydratase</fullName>
        <shortName evidence="1">2KMI dehydratase</shortName>
    </alternativeName>
</protein>
<organism>
    <name type="scientific">Klebsiella pneumoniae (strain 342)</name>
    <dbReference type="NCBI Taxonomy" id="507522"/>
    <lineage>
        <taxon>Bacteria</taxon>
        <taxon>Pseudomonadati</taxon>
        <taxon>Pseudomonadota</taxon>
        <taxon>Gammaproteobacteria</taxon>
        <taxon>Enterobacterales</taxon>
        <taxon>Enterobacteriaceae</taxon>
        <taxon>Klebsiella/Raoultella group</taxon>
        <taxon>Klebsiella</taxon>
        <taxon>Klebsiella pneumoniae complex</taxon>
    </lineage>
</organism>
<gene>
    <name evidence="1" type="primary">iolE</name>
    <name type="ordered locus">KPK_4988</name>
</gene>
<comment type="function">
    <text evidence="1">Catalyzes the dehydration of inosose (2-keto-myo-inositol, 2KMI or 2,4,6/3,5-pentahydroxycyclohexanone) to 3D-(3,5/4)-trihydroxycyclohexane-1,2-dione (D-2,3-diketo-4-deoxy-epi-inositol).</text>
</comment>
<comment type="catalytic activity">
    <reaction evidence="1">
        <text>scyllo-inosose = 3D-3,5/4-trihydroxycyclohexane-1,2-dione + H2O</text>
        <dbReference type="Rhea" id="RHEA:14065"/>
        <dbReference type="ChEBI" id="CHEBI:15377"/>
        <dbReference type="ChEBI" id="CHEBI:17811"/>
        <dbReference type="ChEBI" id="CHEBI:28446"/>
        <dbReference type="EC" id="4.2.1.44"/>
    </reaction>
</comment>
<comment type="cofactor">
    <cofactor evidence="1">
        <name>glutathione</name>
        <dbReference type="ChEBI" id="CHEBI:57925"/>
    </cofactor>
</comment>
<comment type="cofactor">
    <cofactor evidence="1">
        <name>Co(2+)</name>
        <dbReference type="ChEBI" id="CHEBI:48828"/>
    </cofactor>
    <cofactor evidence="1">
        <name>Mn(2+)</name>
        <dbReference type="ChEBI" id="CHEBI:29035"/>
    </cofactor>
</comment>
<comment type="similarity">
    <text evidence="1">Belongs to the IolE/MocC family.</text>
</comment>
<name>IOLE_KLEP3</name>
<dbReference type="EC" id="4.2.1.44" evidence="1"/>
<dbReference type="EMBL" id="CP000964">
    <property type="protein sequence ID" value="ACI11772.1"/>
    <property type="molecule type" value="Genomic_DNA"/>
</dbReference>
<dbReference type="SMR" id="B5Y2S3"/>
<dbReference type="KEGG" id="kpe:KPK_4988"/>
<dbReference type="HOGENOM" id="CLU_059523_0_0_6"/>
<dbReference type="Proteomes" id="UP000001734">
    <property type="component" value="Chromosome"/>
</dbReference>
<dbReference type="GO" id="GO:0030145">
    <property type="term" value="F:manganese ion binding"/>
    <property type="evidence" value="ECO:0007669"/>
    <property type="project" value="UniProtKB-UniRule"/>
</dbReference>
<dbReference type="GO" id="GO:0050114">
    <property type="term" value="F:myo-inosose-2 dehydratase activity"/>
    <property type="evidence" value="ECO:0007669"/>
    <property type="project" value="UniProtKB-UniRule"/>
</dbReference>
<dbReference type="GO" id="GO:0019310">
    <property type="term" value="P:inositol catabolic process"/>
    <property type="evidence" value="ECO:0007669"/>
    <property type="project" value="UniProtKB-UniRule"/>
</dbReference>
<dbReference type="Gene3D" id="3.20.20.150">
    <property type="entry name" value="Divalent-metal-dependent TIM barrel enzymes"/>
    <property type="match status" value="1"/>
</dbReference>
<dbReference type="HAMAP" id="MF_01672">
    <property type="entry name" value="IolE"/>
    <property type="match status" value="1"/>
</dbReference>
<dbReference type="InterPro" id="IPR023952">
    <property type="entry name" value="IolE"/>
</dbReference>
<dbReference type="InterPro" id="IPR030823">
    <property type="entry name" value="IolE/MocC"/>
</dbReference>
<dbReference type="InterPro" id="IPR050312">
    <property type="entry name" value="IolE/XylAMocC-like"/>
</dbReference>
<dbReference type="InterPro" id="IPR036237">
    <property type="entry name" value="Xyl_isomerase-like_sf"/>
</dbReference>
<dbReference type="InterPro" id="IPR013022">
    <property type="entry name" value="Xyl_isomerase-like_TIM-brl"/>
</dbReference>
<dbReference type="NCBIfam" id="TIGR04379">
    <property type="entry name" value="myo_inos_iolE"/>
    <property type="match status" value="1"/>
</dbReference>
<dbReference type="PANTHER" id="PTHR12110">
    <property type="entry name" value="HYDROXYPYRUVATE ISOMERASE"/>
    <property type="match status" value="1"/>
</dbReference>
<dbReference type="PANTHER" id="PTHR12110:SF41">
    <property type="entry name" value="INOSOSE DEHYDRATASE"/>
    <property type="match status" value="1"/>
</dbReference>
<dbReference type="Pfam" id="PF01261">
    <property type="entry name" value="AP_endonuc_2"/>
    <property type="match status" value="1"/>
</dbReference>
<dbReference type="SUPFAM" id="SSF51658">
    <property type="entry name" value="Xylose isomerase-like"/>
    <property type="match status" value="1"/>
</dbReference>
<evidence type="ECO:0000255" key="1">
    <source>
        <dbReference type="HAMAP-Rule" id="MF_01672"/>
    </source>
</evidence>
<feature type="chain" id="PRO_1000187327" description="Inosose dehydratase">
    <location>
        <begin position="1"/>
        <end position="299"/>
    </location>
</feature>
<accession>B5Y2S3</accession>
<reference key="1">
    <citation type="journal article" date="2008" name="PLoS Genet.">
        <title>Complete genome sequence of the N2-fixing broad host range endophyte Klebsiella pneumoniae 342 and virulence predictions verified in mice.</title>
        <authorList>
            <person name="Fouts D.E."/>
            <person name="Tyler H.L."/>
            <person name="DeBoy R.T."/>
            <person name="Daugherty S."/>
            <person name="Ren Q."/>
            <person name="Badger J.H."/>
            <person name="Durkin A.S."/>
            <person name="Huot H."/>
            <person name="Shrivastava S."/>
            <person name="Kothari S."/>
            <person name="Dodson R.J."/>
            <person name="Mohamoud Y."/>
            <person name="Khouri H."/>
            <person name="Roesch L.F.W."/>
            <person name="Krogfelt K.A."/>
            <person name="Struve C."/>
            <person name="Triplett E.W."/>
            <person name="Methe B.A."/>
        </authorList>
    </citation>
    <scope>NUCLEOTIDE SEQUENCE [LARGE SCALE GENOMIC DNA]</scope>
    <source>
        <strain>342</strain>
    </source>
</reference>
<proteinExistence type="inferred from homology"/>